<feature type="chain" id="PRO_0000049391" description="Zinc fingers and homeoboxes protein 2">
    <location>
        <begin position="1"/>
        <end position="837"/>
    </location>
</feature>
<feature type="zinc finger region" description="C2H2-type 1" evidence="2 8">
    <location>
        <begin position="78"/>
        <end position="101"/>
    </location>
</feature>
<feature type="zinc finger region" description="C2H2-type 2" evidence="2 8">
    <location>
        <begin position="110"/>
        <end position="133"/>
    </location>
</feature>
<feature type="DNA-binding region" description="Homeobox 1" evidence="3 8">
    <location>
        <begin position="263"/>
        <end position="324"/>
    </location>
</feature>
<feature type="DNA-binding region" description="Homeobox 2" evidence="3 8">
    <location>
        <begin position="439"/>
        <end position="501"/>
    </location>
</feature>
<feature type="DNA-binding region" description="Homeobox 3" evidence="3 8">
    <location>
        <begin position="530"/>
        <end position="591"/>
    </location>
</feature>
<feature type="DNA-binding region" description="Homeobox 4" evidence="3 8">
    <location>
        <begin position="628"/>
        <end position="690"/>
    </location>
</feature>
<feature type="region of interest" description="Interaction with EFNB1" evidence="1">
    <location>
        <begin position="27"/>
        <end position="77"/>
    </location>
</feature>
<feature type="region of interest" description="Disordered" evidence="4">
    <location>
        <begin position="164"/>
        <end position="204"/>
    </location>
</feature>
<feature type="region of interest" description="Required for homodimerization" evidence="5">
    <location>
        <begin position="195"/>
        <end position="358"/>
    </location>
</feature>
<feature type="region of interest" description="Required for interaction with NFYA" evidence="5">
    <location>
        <begin position="263"/>
        <end position="497"/>
    </location>
</feature>
<feature type="region of interest" description="Required for repressor activity" evidence="5">
    <location>
        <begin position="263"/>
        <end position="446"/>
    </location>
</feature>
<feature type="region of interest" description="Required for nuclear localization" evidence="5">
    <location>
        <begin position="317"/>
        <end position="446"/>
    </location>
</feature>
<feature type="region of interest" description="Disordered" evidence="4">
    <location>
        <begin position="404"/>
        <end position="445"/>
    </location>
</feature>
<feature type="region of interest" description="Disordered" evidence="4">
    <location>
        <begin position="755"/>
        <end position="837"/>
    </location>
</feature>
<feature type="compositionally biased region" description="Low complexity" evidence="4">
    <location>
        <begin position="164"/>
        <end position="180"/>
    </location>
</feature>
<feature type="compositionally biased region" description="Basic and acidic residues" evidence="4">
    <location>
        <begin position="192"/>
        <end position="204"/>
    </location>
</feature>
<feature type="compositionally biased region" description="Pro residues" evidence="4">
    <location>
        <begin position="427"/>
        <end position="439"/>
    </location>
</feature>
<feature type="modified residue" description="Phosphothreonine" evidence="11 12">
    <location>
        <position position="37"/>
    </location>
</feature>
<feature type="modified residue" description="Phosphothreonine" evidence="11">
    <location>
        <position position="207"/>
    </location>
</feature>
<feature type="modified residue" description="Phosphoserine" evidence="1">
    <location>
        <position position="825"/>
    </location>
</feature>
<feature type="modified residue" description="Phosphoserine" evidence="1">
    <location>
        <position position="827"/>
    </location>
</feature>
<feature type="cross-link" description="Glycyl lysine isopeptide (Lys-Gly) (interchain with G-Cter in SUMO2)" evidence="13">
    <location>
        <position position="64"/>
    </location>
</feature>
<feature type="cross-link" description="Glycyl lysine isopeptide (Lys-Gly) (interchain with G-Cter in SUMO2)" evidence="13">
    <location>
        <position position="455"/>
    </location>
</feature>
<feature type="sequence variant" id="VAR_049594" description="In dbSNP:rs9649951.">
    <original>V</original>
    <variation>M</variation>
    <location>
        <position position="357"/>
    </location>
</feature>
<feature type="sequence variant" id="VAR_049595" description="In dbSNP:rs35319449.">
    <original>R</original>
    <variation>K</variation>
    <location>
        <position position="649"/>
    </location>
</feature>
<feature type="sequence variant" id="VAR_049596" description="In dbSNP:rs3802264.">
    <original>G</original>
    <variation>S</variation>
    <location>
        <position position="779"/>
    </location>
</feature>
<feature type="helix" evidence="15">
    <location>
        <begin position="448"/>
        <end position="459"/>
    </location>
</feature>
<feature type="helix" evidence="15">
    <location>
        <begin position="460"/>
        <end position="462"/>
    </location>
</feature>
<feature type="helix" evidence="15">
    <location>
        <begin position="466"/>
        <end position="476"/>
    </location>
</feature>
<feature type="helix" evidence="15">
    <location>
        <begin position="480"/>
        <end position="500"/>
    </location>
</feature>
<feature type="helix" evidence="14">
    <location>
        <begin position="538"/>
        <end position="550"/>
    </location>
</feature>
<feature type="helix" evidence="14">
    <location>
        <begin position="556"/>
        <end position="566"/>
    </location>
</feature>
<feature type="helix" evidence="14">
    <location>
        <begin position="570"/>
        <end position="585"/>
    </location>
</feature>
<sequence>MASKRKSTTPCMVRTSQVVEQDVPEEVDRAKEKGIGTPQPDVAKDSWAAELENSSKENEVIEVKSMGESQSKKLQGGYECKYCPYSTQNLNEFTEHVDMQHPNVILNPLYVCAECNFTTKKYDSLSDHNSKFHPGEANFKLKLIKRNNQTVLEQSIETTNHVVSITTSGPGTGDSDSGISVSKTPIMKPGKPKADAKKVPKKPEEITPENHVEGTARLVTDTAEILSRLGGVELLQDTLGHVMPSVQLPPNINLVPKVPVPLNTTKYNSALDTNATMINSFNKFPYPTQAELSWLTAASKHPEEHIRIWFATQRLKHGISWSPEEVEEARKKMFNGTIQSVPPTITVLPAQLAPTKVTQPILQTALPCQILGQTSLVLTQVTSGSTTVSCSPITLAVAGVTNHGQKRPLVTPQAAPEPKRPHIAQVPEPPPKVANPPLTPASDRKKTKEQIAHLKASFLQSQFPDDAEVYRLIEVTGLARSEIKKWFSDHRYRCQRGIVHITSESLAKDQLAIAASRHGRTYHAYPDFAPQKFKEKTQGQVKILEDSFLKSSFPTQAELDRLRVETKLSRREIDSWFSERRKLRDSMEQAVLDSMGSGKKGQDVGAPNGALSRLDQLSGAQLTSSLPSPSPAIAKSQEQVHLLRSTFARTQWPTPQEYDQLAAKTGLVRTEIVRWFKENRCLLKTGTVKWMEQYQHQPMADDHGYDAVARKATKPMAESPKNGGDVVPQYYKDPKKLCEEDLEKLVTRVKVGSEPAKDCLPAKPSEATSDRSEGSSRDGQGSDENEESSVVDYVEVTVGEEDAISDRSDSWSQAAAEGVSELAESDSDCVPAEAGQA</sequence>
<dbReference type="EMBL" id="AB083653">
    <property type="protein sequence ID" value="BAC76615.1"/>
    <property type="molecule type" value="mRNA"/>
</dbReference>
<dbReference type="EMBL" id="AB020661">
    <property type="protein sequence ID" value="BAA74877.2"/>
    <property type="status" value="ALT_INIT"/>
    <property type="molecule type" value="mRNA"/>
</dbReference>
<dbReference type="EMBL" id="BC042145">
    <property type="protein sequence ID" value="AAH42145.1"/>
    <property type="molecule type" value="mRNA"/>
</dbReference>
<dbReference type="CCDS" id="CCDS6336.1"/>
<dbReference type="RefSeq" id="NP_001349726.1">
    <property type="nucleotide sequence ID" value="NM_001362797.2"/>
</dbReference>
<dbReference type="RefSeq" id="NP_001399725.1">
    <property type="nucleotide sequence ID" value="NM_001412796.1"/>
</dbReference>
<dbReference type="RefSeq" id="NP_001399726.1">
    <property type="nucleotide sequence ID" value="NM_001412797.1"/>
</dbReference>
<dbReference type="RefSeq" id="NP_001399727.1">
    <property type="nucleotide sequence ID" value="NM_001412798.1"/>
</dbReference>
<dbReference type="RefSeq" id="NP_001399728.1">
    <property type="nucleotide sequence ID" value="NM_001412799.1"/>
</dbReference>
<dbReference type="RefSeq" id="NP_001399729.1">
    <property type="nucleotide sequence ID" value="NM_001412800.1"/>
</dbReference>
<dbReference type="RefSeq" id="NP_001399730.1">
    <property type="nucleotide sequence ID" value="NM_001412801.1"/>
</dbReference>
<dbReference type="RefSeq" id="NP_001399731.1">
    <property type="nucleotide sequence ID" value="NM_001412802.1"/>
</dbReference>
<dbReference type="RefSeq" id="NP_001399732.1">
    <property type="nucleotide sequence ID" value="NM_001412803.1"/>
</dbReference>
<dbReference type="RefSeq" id="NP_001399733.1">
    <property type="nucleotide sequence ID" value="NM_001412804.1"/>
</dbReference>
<dbReference type="RefSeq" id="NP_001399734.1">
    <property type="nucleotide sequence ID" value="NM_001412805.1"/>
</dbReference>
<dbReference type="RefSeq" id="NP_001399735.1">
    <property type="nucleotide sequence ID" value="NM_001412806.1"/>
</dbReference>
<dbReference type="RefSeq" id="NP_001399736.1">
    <property type="nucleotide sequence ID" value="NM_001412807.1"/>
</dbReference>
<dbReference type="RefSeq" id="NP_001399737.1">
    <property type="nucleotide sequence ID" value="NM_001412808.1"/>
</dbReference>
<dbReference type="RefSeq" id="NP_001399738.1">
    <property type="nucleotide sequence ID" value="NM_001412809.1"/>
</dbReference>
<dbReference type="RefSeq" id="NP_001399739.1">
    <property type="nucleotide sequence ID" value="NM_001412810.1"/>
</dbReference>
<dbReference type="RefSeq" id="NP_001399740.1">
    <property type="nucleotide sequence ID" value="NM_001412811.1"/>
</dbReference>
<dbReference type="RefSeq" id="NP_001399741.1">
    <property type="nucleotide sequence ID" value="NM_001412812.1"/>
</dbReference>
<dbReference type="RefSeq" id="NP_055758.1">
    <property type="nucleotide sequence ID" value="NM_014943.5"/>
</dbReference>
<dbReference type="RefSeq" id="XP_005250893.1">
    <property type="nucleotide sequence ID" value="XM_005250836.6"/>
</dbReference>
<dbReference type="RefSeq" id="XP_005250894.1">
    <property type="nucleotide sequence ID" value="XM_005250837.4"/>
</dbReference>
<dbReference type="RefSeq" id="XP_011515233.1">
    <property type="nucleotide sequence ID" value="XM_011516931.2"/>
</dbReference>
<dbReference type="RefSeq" id="XP_011515234.1">
    <property type="nucleotide sequence ID" value="XM_011516932.4"/>
</dbReference>
<dbReference type="RefSeq" id="XP_047277544.1">
    <property type="nucleotide sequence ID" value="XM_047421588.1"/>
</dbReference>
<dbReference type="RefSeq" id="XP_047277545.1">
    <property type="nucleotide sequence ID" value="XM_047421589.1"/>
</dbReference>
<dbReference type="RefSeq" id="XP_047277546.1">
    <property type="nucleotide sequence ID" value="XM_047421590.1"/>
</dbReference>
<dbReference type="RefSeq" id="XP_054216116.1">
    <property type="nucleotide sequence ID" value="XM_054360141.1"/>
</dbReference>
<dbReference type="RefSeq" id="XP_054216117.1">
    <property type="nucleotide sequence ID" value="XM_054360142.1"/>
</dbReference>
<dbReference type="RefSeq" id="XP_054216118.1">
    <property type="nucleotide sequence ID" value="XM_054360143.1"/>
</dbReference>
<dbReference type="RefSeq" id="XP_054216119.1">
    <property type="nucleotide sequence ID" value="XM_054360144.1"/>
</dbReference>
<dbReference type="RefSeq" id="XP_054216120.1">
    <property type="nucleotide sequence ID" value="XM_054360145.1"/>
</dbReference>
<dbReference type="PDB" id="2DMP">
    <property type="method" value="NMR"/>
    <property type="chains" value="A=524-599"/>
</dbReference>
<dbReference type="PDB" id="3NAU">
    <property type="method" value="X-ray"/>
    <property type="resolution" value="2.70 A"/>
    <property type="chains" value="A/B=444-501"/>
</dbReference>
<dbReference type="PDBsum" id="2DMP"/>
<dbReference type="PDBsum" id="3NAU"/>
<dbReference type="SMR" id="Q9Y6X8"/>
<dbReference type="BioGRID" id="116549">
    <property type="interactions" value="67"/>
</dbReference>
<dbReference type="FunCoup" id="Q9Y6X8">
    <property type="interactions" value="2004"/>
</dbReference>
<dbReference type="IntAct" id="Q9Y6X8">
    <property type="interactions" value="68"/>
</dbReference>
<dbReference type="MINT" id="Q9Y6X8"/>
<dbReference type="STRING" id="9606.ENSP00000314709"/>
<dbReference type="GlyCosmos" id="Q9Y6X8">
    <property type="glycosylation" value="2 sites, 2 glycans"/>
</dbReference>
<dbReference type="GlyGen" id="Q9Y6X8">
    <property type="glycosylation" value="4 sites, 2 O-linked glycans (4 sites)"/>
</dbReference>
<dbReference type="iPTMnet" id="Q9Y6X8"/>
<dbReference type="PhosphoSitePlus" id="Q9Y6X8"/>
<dbReference type="BioMuta" id="ZHX2"/>
<dbReference type="DMDM" id="44888553"/>
<dbReference type="jPOST" id="Q9Y6X8"/>
<dbReference type="MassIVE" id="Q9Y6X8"/>
<dbReference type="PaxDb" id="9606-ENSP00000314709"/>
<dbReference type="PeptideAtlas" id="Q9Y6X8"/>
<dbReference type="ProteomicsDB" id="86821"/>
<dbReference type="Pumba" id="Q9Y6X8"/>
<dbReference type="Antibodypedia" id="13770">
    <property type="antibodies" value="391 antibodies from 36 providers"/>
</dbReference>
<dbReference type="DNASU" id="22882"/>
<dbReference type="Ensembl" id="ENST00000314393.6">
    <property type="protein sequence ID" value="ENSP00000314709.4"/>
    <property type="gene ID" value="ENSG00000178764.8"/>
</dbReference>
<dbReference type="GeneID" id="22882"/>
<dbReference type="KEGG" id="hsa:22882"/>
<dbReference type="MANE-Select" id="ENST00000314393.6">
    <property type="protein sequence ID" value="ENSP00000314709.4"/>
    <property type="RefSeq nucleotide sequence ID" value="NM_014943.5"/>
    <property type="RefSeq protein sequence ID" value="NP_055758.1"/>
</dbReference>
<dbReference type="UCSC" id="uc003ypk.2">
    <property type="organism name" value="human"/>
</dbReference>
<dbReference type="AGR" id="HGNC:18513"/>
<dbReference type="CTD" id="22882"/>
<dbReference type="DisGeNET" id="22882"/>
<dbReference type="GeneCards" id="ZHX2"/>
<dbReference type="HGNC" id="HGNC:18513">
    <property type="gene designation" value="ZHX2"/>
</dbReference>
<dbReference type="HPA" id="ENSG00000178764">
    <property type="expression patterns" value="Low tissue specificity"/>
</dbReference>
<dbReference type="MalaCards" id="ZHX2"/>
<dbReference type="MIM" id="609185">
    <property type="type" value="gene"/>
</dbReference>
<dbReference type="neXtProt" id="NX_Q9Y6X8"/>
<dbReference type="OpenTargets" id="ENSG00000178764"/>
<dbReference type="PharmGKB" id="PA128394591"/>
<dbReference type="VEuPathDB" id="HostDB:ENSG00000178764"/>
<dbReference type="eggNOG" id="ENOG502RHIC">
    <property type="taxonomic scope" value="Eukaryota"/>
</dbReference>
<dbReference type="GeneTree" id="ENSGT00950000182893"/>
<dbReference type="HOGENOM" id="CLU_009147_1_0_1"/>
<dbReference type="InParanoid" id="Q9Y6X8"/>
<dbReference type="OMA" id="ENHMEGT"/>
<dbReference type="OrthoDB" id="6159439at2759"/>
<dbReference type="PAN-GO" id="Q9Y6X8">
    <property type="GO annotations" value="3 GO annotations based on evolutionary models"/>
</dbReference>
<dbReference type="PhylomeDB" id="Q9Y6X8"/>
<dbReference type="TreeFam" id="TF333363"/>
<dbReference type="PathwayCommons" id="Q9Y6X8"/>
<dbReference type="SignaLink" id="Q9Y6X8"/>
<dbReference type="BioGRID-ORCS" id="22882">
    <property type="hits" value="10 hits in 1170 CRISPR screens"/>
</dbReference>
<dbReference type="ChiTaRS" id="ZHX2">
    <property type="organism name" value="human"/>
</dbReference>
<dbReference type="EvolutionaryTrace" id="Q9Y6X8"/>
<dbReference type="GeneWiki" id="ZHX2"/>
<dbReference type="GenomeRNAi" id="22882"/>
<dbReference type="Pharos" id="Q9Y6X8">
    <property type="development level" value="Tbio"/>
</dbReference>
<dbReference type="PRO" id="PR:Q9Y6X8"/>
<dbReference type="Proteomes" id="UP000005640">
    <property type="component" value="Chromosome 8"/>
</dbReference>
<dbReference type="RNAct" id="Q9Y6X8">
    <property type="molecule type" value="protein"/>
</dbReference>
<dbReference type="Bgee" id="ENSG00000178764">
    <property type="expression patterns" value="Expressed in superficial temporal artery and 206 other cell types or tissues"/>
</dbReference>
<dbReference type="ExpressionAtlas" id="Q9Y6X8">
    <property type="expression patterns" value="baseline and differential"/>
</dbReference>
<dbReference type="GO" id="GO:0000785">
    <property type="term" value="C:chromatin"/>
    <property type="evidence" value="ECO:0000247"/>
    <property type="project" value="NTNU_SB"/>
</dbReference>
<dbReference type="GO" id="GO:0005829">
    <property type="term" value="C:cytosol"/>
    <property type="evidence" value="ECO:0000314"/>
    <property type="project" value="HPA"/>
</dbReference>
<dbReference type="GO" id="GO:0005654">
    <property type="term" value="C:nucleoplasm"/>
    <property type="evidence" value="ECO:0000314"/>
    <property type="project" value="HPA"/>
</dbReference>
<dbReference type="GO" id="GO:0005634">
    <property type="term" value="C:nucleus"/>
    <property type="evidence" value="ECO:0000314"/>
    <property type="project" value="UniProtKB"/>
</dbReference>
<dbReference type="GO" id="GO:0003677">
    <property type="term" value="F:DNA binding"/>
    <property type="evidence" value="ECO:0007669"/>
    <property type="project" value="UniProtKB-KW"/>
</dbReference>
<dbReference type="GO" id="GO:0000981">
    <property type="term" value="F:DNA-binding transcription factor activity, RNA polymerase II-specific"/>
    <property type="evidence" value="ECO:0000247"/>
    <property type="project" value="NTNU_SB"/>
</dbReference>
<dbReference type="GO" id="GO:0042802">
    <property type="term" value="F:identical protein binding"/>
    <property type="evidence" value="ECO:0000353"/>
    <property type="project" value="IntAct"/>
</dbReference>
<dbReference type="GO" id="GO:0046982">
    <property type="term" value="F:protein heterodimerization activity"/>
    <property type="evidence" value="ECO:0000314"/>
    <property type="project" value="UniProtKB"/>
</dbReference>
<dbReference type="GO" id="GO:0042803">
    <property type="term" value="F:protein homodimerization activity"/>
    <property type="evidence" value="ECO:0000314"/>
    <property type="project" value="UniProtKB"/>
</dbReference>
<dbReference type="GO" id="GO:0008270">
    <property type="term" value="F:zinc ion binding"/>
    <property type="evidence" value="ECO:0007669"/>
    <property type="project" value="UniProtKB-KW"/>
</dbReference>
<dbReference type="GO" id="GO:0021953">
    <property type="term" value="P:central nervous system neuron differentiation"/>
    <property type="evidence" value="ECO:0007669"/>
    <property type="project" value="Ensembl"/>
</dbReference>
<dbReference type="GO" id="GO:0006402">
    <property type="term" value="P:mRNA catabolic process"/>
    <property type="evidence" value="ECO:0007669"/>
    <property type="project" value="Ensembl"/>
</dbReference>
<dbReference type="GO" id="GO:0045892">
    <property type="term" value="P:negative regulation of DNA-templated transcription"/>
    <property type="evidence" value="ECO:0000314"/>
    <property type="project" value="UniProtKB"/>
</dbReference>
<dbReference type="GO" id="GO:0045665">
    <property type="term" value="P:negative regulation of neuron differentiation"/>
    <property type="evidence" value="ECO:0007669"/>
    <property type="project" value="Ensembl"/>
</dbReference>
<dbReference type="GO" id="GO:0000122">
    <property type="term" value="P:negative regulation of transcription by RNA polymerase II"/>
    <property type="evidence" value="ECO:0000314"/>
    <property type="project" value="UniProtKB"/>
</dbReference>
<dbReference type="GO" id="GO:0006357">
    <property type="term" value="P:regulation of transcription by RNA polymerase II"/>
    <property type="evidence" value="ECO:0000318"/>
    <property type="project" value="GO_Central"/>
</dbReference>
<dbReference type="GO" id="GO:0060040">
    <property type="term" value="P:retinal bipolar neuron differentiation"/>
    <property type="evidence" value="ECO:0007669"/>
    <property type="project" value="Ensembl"/>
</dbReference>
<dbReference type="GO" id="GO:0035019">
    <property type="term" value="P:somatic stem cell population maintenance"/>
    <property type="evidence" value="ECO:0007669"/>
    <property type="project" value="Ensembl"/>
</dbReference>
<dbReference type="CDD" id="cd00086">
    <property type="entry name" value="homeodomain"/>
    <property type="match status" value="4"/>
</dbReference>
<dbReference type="FunFam" id="3.30.160.60:FF:000296">
    <property type="entry name" value="Zinc fingers and homeoboxes protein 1"/>
    <property type="match status" value="1"/>
</dbReference>
<dbReference type="FunFam" id="1.10.10.60:FF:000247">
    <property type="entry name" value="Zinc fingers and homeoboxes protein 2"/>
    <property type="match status" value="1"/>
</dbReference>
<dbReference type="FunFam" id="1.10.10.60:FF:000264">
    <property type="entry name" value="zinc fingers and homeoboxes protein 2"/>
    <property type="match status" value="1"/>
</dbReference>
<dbReference type="FunFam" id="1.10.10.60:FF:000272">
    <property type="entry name" value="zinc fingers and homeoboxes protein 2"/>
    <property type="match status" value="1"/>
</dbReference>
<dbReference type="FunFam" id="1.10.10.60:FF:000062">
    <property type="entry name" value="zinc fingers and homeoboxes protein 3"/>
    <property type="match status" value="1"/>
</dbReference>
<dbReference type="Gene3D" id="3.30.160.60">
    <property type="entry name" value="Classic Zinc Finger"/>
    <property type="match status" value="1"/>
</dbReference>
<dbReference type="Gene3D" id="1.10.10.60">
    <property type="entry name" value="Homeodomain-like"/>
    <property type="match status" value="4"/>
</dbReference>
<dbReference type="InterPro" id="IPR001356">
    <property type="entry name" value="HD"/>
</dbReference>
<dbReference type="InterPro" id="IPR009057">
    <property type="entry name" value="Homeodomain-like_sf"/>
</dbReference>
<dbReference type="InterPro" id="IPR041057">
    <property type="entry name" value="ZHX_Znf_C2H2"/>
</dbReference>
<dbReference type="InterPro" id="IPR036236">
    <property type="entry name" value="Znf_C2H2_sf"/>
</dbReference>
<dbReference type="InterPro" id="IPR013087">
    <property type="entry name" value="Znf_C2H2_type"/>
</dbReference>
<dbReference type="PANTHER" id="PTHR15467:SF5">
    <property type="entry name" value="ZINC FINGERS AND HOMEOBOXES PROTEIN 2"/>
    <property type="match status" value="1"/>
</dbReference>
<dbReference type="PANTHER" id="PTHR15467">
    <property type="entry name" value="ZINC-FINGERS AND HOMEOBOXES RELATED"/>
    <property type="match status" value="1"/>
</dbReference>
<dbReference type="Pfam" id="PF00046">
    <property type="entry name" value="Homeodomain"/>
    <property type="match status" value="3"/>
</dbReference>
<dbReference type="Pfam" id="PF18387">
    <property type="entry name" value="zf_C2H2_ZHX"/>
    <property type="match status" value="1"/>
</dbReference>
<dbReference type="SMART" id="SM00389">
    <property type="entry name" value="HOX"/>
    <property type="match status" value="4"/>
</dbReference>
<dbReference type="SMART" id="SM00355">
    <property type="entry name" value="ZnF_C2H2"/>
    <property type="match status" value="2"/>
</dbReference>
<dbReference type="SUPFAM" id="SSF57667">
    <property type="entry name" value="beta-beta-alpha zinc fingers"/>
    <property type="match status" value="2"/>
</dbReference>
<dbReference type="SUPFAM" id="SSF46689">
    <property type="entry name" value="Homeodomain-like"/>
    <property type="match status" value="4"/>
</dbReference>
<dbReference type="PROSITE" id="PS50071">
    <property type="entry name" value="HOMEOBOX_2"/>
    <property type="match status" value="3"/>
</dbReference>
<dbReference type="PROSITE" id="PS50157">
    <property type="entry name" value="ZINC_FINGER_C2H2_2"/>
    <property type="match status" value="1"/>
</dbReference>
<proteinExistence type="evidence at protein level"/>
<comment type="function">
    <text evidence="1 5">Acts as a transcriptional repressor (PubMed:12741956). Represses the promoter activity of the CDC25C gene stimulated by NFYA (PubMed:12741956). May play a role in retinal development where it regulates the composition of bipolar cell populations, by promoting differentiation of bipolar OFF-type cells (By similarity). In the brain, may promote maintenance and suppress differentiation of neural progenitor cells in the developing cortex (By similarity).</text>
</comment>
<comment type="subunit">
    <text evidence="1 5 6">Homodimer (via homeobox domain) (PubMed:12741956, PubMed:14659886). Heterodimer with ZHX1 (via homeobox domain 1) (PubMed:12741956). Heterodimer with ZHX3 (via homeobox domain 1) (PubMed:12741956, PubMed:14659886). Heterodimerization with ZHX1 is not necessary for repressor activity (PubMed:12741956). Interacts (via homeobox domain) with NFYA (via N-terminus) (PubMed:12741956). Interacts with EFNB1 intracellular domain peptide; the interaction enhances ZHX2 transcriptional repression activity (By similarity).</text>
</comment>
<comment type="interaction">
    <interactant intactId="EBI-948566">
        <id>Q9Y6X8</id>
    </interactant>
    <interactant intactId="EBI-4314702">
        <id>Q03403</id>
        <label>TFF2</label>
    </interactant>
    <organismsDiffer>false</organismsDiffer>
    <experiments>3</experiments>
</comment>
<comment type="interaction">
    <interactant intactId="EBI-948566">
        <id>Q9Y6X8</id>
    </interactant>
    <interactant intactId="EBI-347767">
        <id>Q9UKY1</id>
        <label>ZHX1</label>
    </interactant>
    <organismsDiffer>false</organismsDiffer>
    <experiments>2</experiments>
</comment>
<comment type="interaction">
    <interactant intactId="EBI-948566">
        <id>Q9Y6X8</id>
    </interactant>
    <interactant intactId="EBI-948566">
        <id>Q9Y6X8</id>
        <label>ZHX2</label>
    </interactant>
    <organismsDiffer>false</organismsDiffer>
    <experiments>2</experiments>
</comment>
<comment type="subcellular location">
    <subcellularLocation>
        <location evidence="3 5 7">Nucleus</location>
    </subcellularLocation>
    <text evidence="1">Colocalizes with EFNB1 intracellular domain in the nucleus.</text>
</comment>
<comment type="tissue specificity">
    <text evidence="5 7">Ubiquitously expressed. Expressed in podocytes.</text>
</comment>
<comment type="similarity">
    <text evidence="8">Belongs to the ZHX family.</text>
</comment>
<comment type="sequence caution" evidence="8">
    <conflict type="erroneous initiation">
        <sequence resource="EMBL-CDS" id="BAA74877"/>
    </conflict>
    <text>Extended N-terminus.</text>
</comment>
<protein>
    <recommendedName>
        <fullName>Zinc fingers and homeoboxes protein 2</fullName>
    </recommendedName>
    <alternativeName>
        <fullName>Alpha-fetoprotein regulator 1</fullName>
        <shortName>AFP regulator 1</shortName>
    </alternativeName>
    <alternativeName>
        <fullName>Regulator of AFP</fullName>
    </alternativeName>
    <alternativeName>
        <fullName>Zinc finger and homeodomain protein 2</fullName>
    </alternativeName>
</protein>
<reference evidence="8" key="1">
    <citation type="journal article" date="2003" name="Biochem. J.">
        <title>Zinc-fingers and homeoboxes (ZHX) 2, a novel member of the ZHX family, functions as a transcriptional repressor.</title>
        <authorList>
            <person name="Kawata H."/>
            <person name="Yamada K."/>
            <person name="Shou Z."/>
            <person name="Mizutani T."/>
            <person name="Yazawa T."/>
            <person name="Yoshino M."/>
            <person name="Sekiguchi T."/>
            <person name="Kajitani T."/>
            <person name="Miyamoto K."/>
        </authorList>
    </citation>
    <scope>NUCLEOTIDE SEQUENCE [MRNA]</scope>
    <scope>FUNCTION</scope>
    <scope>SUBUNIT</scope>
    <scope>INTERACTION WITH NFYA</scope>
    <scope>SUBCELLULAR LOCATION</scope>
    <scope>TISSUE SPECIFICITY</scope>
    <source>
        <tissue evidence="10">Testis</tissue>
    </source>
</reference>
<reference key="2">
    <citation type="journal article" date="1998" name="DNA Res.">
        <title>Prediction of the coding sequences of unidentified human genes. XII. The complete sequences of 100 new cDNA clones from brain which code for large proteins in vitro.</title>
        <authorList>
            <person name="Nagase T."/>
            <person name="Ishikawa K."/>
            <person name="Suyama M."/>
            <person name="Kikuno R."/>
            <person name="Hirosawa M."/>
            <person name="Miyajima N."/>
            <person name="Tanaka A."/>
            <person name="Kotani H."/>
            <person name="Nomura N."/>
            <person name="Ohara O."/>
        </authorList>
    </citation>
    <scope>NUCLEOTIDE SEQUENCE [LARGE SCALE MRNA]</scope>
    <source>
        <tissue>Brain</tissue>
    </source>
</reference>
<reference key="3">
    <citation type="submission" date="2004-01" db="EMBL/GenBank/DDBJ databases">
        <authorList>
            <person name="Ohara O."/>
            <person name="Suyama M."/>
            <person name="Kikuno R."/>
            <person name="Nagase T."/>
            <person name="Ishikawa K."/>
        </authorList>
    </citation>
    <scope>SEQUENCE REVISION</scope>
</reference>
<reference evidence="8" key="4">
    <citation type="journal article" date="2004" name="Genome Res.">
        <title>The status, quality, and expansion of the NIH full-length cDNA project: the Mammalian Gene Collection (MGC).</title>
        <authorList>
            <consortium name="The MGC Project Team"/>
        </authorList>
    </citation>
    <scope>NUCLEOTIDE SEQUENCE [LARGE SCALE MRNA]</scope>
    <source>
        <tissue evidence="9">Lymph</tissue>
    </source>
</reference>
<reference key="5">
    <citation type="journal article" date="2003" name="Gene">
        <title>The mouse zinc-fingers and homeoboxes (ZHX) family: ZHX2 forms a heterodimer with ZHX3.</title>
        <authorList>
            <person name="Kawata H."/>
            <person name="Yamada K."/>
            <person name="Shou Z."/>
            <person name="Mizutani T."/>
            <person name="Miyamoto K."/>
        </authorList>
    </citation>
    <scope>SUBUNIT</scope>
</reference>
<reference key="6">
    <citation type="journal article" date="2006" name="J. Biol. Chem.">
        <title>ZHX proteins regulate podocyte gene expression during the development of nephrotic syndrome.</title>
        <authorList>
            <person name="Liu G."/>
            <person name="Clement L.C."/>
            <person name="Kanwar Y.S."/>
            <person name="Avila-Casado C."/>
            <person name="Chugh S.S."/>
        </authorList>
    </citation>
    <scope>SUBCELLULAR LOCATION</scope>
    <scope>TISSUE SPECIFICITY</scope>
    <source>
        <tissue>Kidney</tissue>
    </source>
</reference>
<reference key="7">
    <citation type="journal article" date="2009" name="Anal. Chem.">
        <title>Lys-N and trypsin cover complementary parts of the phosphoproteome in a refined SCX-based approach.</title>
        <authorList>
            <person name="Gauci S."/>
            <person name="Helbig A.O."/>
            <person name="Slijper M."/>
            <person name="Krijgsveld J."/>
            <person name="Heck A.J."/>
            <person name="Mohammed S."/>
        </authorList>
    </citation>
    <scope>IDENTIFICATION BY MASS SPECTROMETRY [LARGE SCALE ANALYSIS]</scope>
</reference>
<reference key="8">
    <citation type="journal article" date="2013" name="J. Proteome Res.">
        <title>Toward a comprehensive characterization of a human cancer cell phosphoproteome.</title>
        <authorList>
            <person name="Zhou H."/>
            <person name="Di Palma S."/>
            <person name="Preisinger C."/>
            <person name="Peng M."/>
            <person name="Polat A.N."/>
            <person name="Heck A.J."/>
            <person name="Mohammed S."/>
        </authorList>
    </citation>
    <scope>PHOSPHORYLATION [LARGE SCALE ANALYSIS] AT THR-37 AND THR-207</scope>
    <scope>IDENTIFICATION BY MASS SPECTROMETRY [LARGE SCALE ANALYSIS]</scope>
    <source>
        <tissue>Cervix carcinoma</tissue>
    </source>
</reference>
<reference key="9">
    <citation type="journal article" date="2014" name="J. Proteomics">
        <title>An enzyme assisted RP-RPLC approach for in-depth analysis of human liver phosphoproteome.</title>
        <authorList>
            <person name="Bian Y."/>
            <person name="Song C."/>
            <person name="Cheng K."/>
            <person name="Dong M."/>
            <person name="Wang F."/>
            <person name="Huang J."/>
            <person name="Sun D."/>
            <person name="Wang L."/>
            <person name="Ye M."/>
            <person name="Zou H."/>
        </authorList>
    </citation>
    <scope>PHOSPHORYLATION [LARGE SCALE ANALYSIS] AT THR-37</scope>
    <scope>IDENTIFICATION BY MASS SPECTROMETRY [LARGE SCALE ANALYSIS]</scope>
    <source>
        <tissue>Liver</tissue>
    </source>
</reference>
<reference key="10">
    <citation type="journal article" date="2017" name="Nat. Struct. Mol. Biol.">
        <title>Site-specific mapping of the human SUMO proteome reveals co-modification with phosphorylation.</title>
        <authorList>
            <person name="Hendriks I.A."/>
            <person name="Lyon D."/>
            <person name="Young C."/>
            <person name="Jensen L.J."/>
            <person name="Vertegaal A.C."/>
            <person name="Nielsen M.L."/>
        </authorList>
    </citation>
    <scope>SUMOYLATION [LARGE SCALE ANALYSIS] AT LYS-64 AND LYS-455</scope>
    <scope>IDENTIFICATION BY MASS SPECTROMETRY [LARGE SCALE ANALYSIS]</scope>
</reference>
<reference key="11">
    <citation type="submission" date="2006-10" db="PDB data bank">
        <title>Solution structure of the third homeobox domain of zinc fingers and homeoboxes protein 2.</title>
        <authorList>
            <consortium name="RIKEN structural genomics initiative (RSGI)"/>
        </authorList>
    </citation>
    <scope>STRUCTURE BY NMR OF 524-601</scope>
</reference>
<reference key="12">
    <citation type="journal article" date="2010" name="BMC Struct. Biol.">
        <title>Novel structural features in two ZHX homeodomains derived from a systematic study of single and multiple domains.</title>
        <authorList>
            <person name="Bird L.E."/>
            <person name="Ren J."/>
            <person name="Nettleship J.E."/>
            <person name="Folkers G.E."/>
            <person name="Owens R.J."/>
            <person name="Stammers D.K."/>
        </authorList>
    </citation>
    <scope>X-RAY CRYSTALLOGRAPHY (2.7 ANGSTROMS) OF 444-501</scope>
</reference>
<evidence type="ECO:0000250" key="1">
    <source>
        <dbReference type="UniProtKB" id="Q8C0C0"/>
    </source>
</evidence>
<evidence type="ECO:0000255" key="2">
    <source>
        <dbReference type="PROSITE-ProRule" id="PRU00042"/>
    </source>
</evidence>
<evidence type="ECO:0000255" key="3">
    <source>
        <dbReference type="PROSITE-ProRule" id="PRU00108"/>
    </source>
</evidence>
<evidence type="ECO:0000256" key="4">
    <source>
        <dbReference type="SAM" id="MobiDB-lite"/>
    </source>
</evidence>
<evidence type="ECO:0000269" key="5">
    <source>
    </source>
</evidence>
<evidence type="ECO:0000269" key="6">
    <source>
    </source>
</evidence>
<evidence type="ECO:0000269" key="7">
    <source>
    </source>
</evidence>
<evidence type="ECO:0000305" key="8"/>
<evidence type="ECO:0000312" key="9">
    <source>
        <dbReference type="EMBL" id="AAH42145.1"/>
    </source>
</evidence>
<evidence type="ECO:0000312" key="10">
    <source>
        <dbReference type="EMBL" id="BAC76615.1"/>
    </source>
</evidence>
<evidence type="ECO:0007744" key="11">
    <source>
    </source>
</evidence>
<evidence type="ECO:0007744" key="12">
    <source>
    </source>
</evidence>
<evidence type="ECO:0007744" key="13">
    <source>
    </source>
</evidence>
<evidence type="ECO:0007829" key="14">
    <source>
        <dbReference type="PDB" id="2DMP"/>
    </source>
</evidence>
<evidence type="ECO:0007829" key="15">
    <source>
        <dbReference type="PDB" id="3NAU"/>
    </source>
</evidence>
<gene>
    <name type="primary">ZHX2</name>
    <name type="synonym">AFR1</name>
    <name type="synonym">KIAA0854</name>
    <name type="synonym">RAF</name>
</gene>
<organism>
    <name type="scientific">Homo sapiens</name>
    <name type="common">Human</name>
    <dbReference type="NCBI Taxonomy" id="9606"/>
    <lineage>
        <taxon>Eukaryota</taxon>
        <taxon>Metazoa</taxon>
        <taxon>Chordata</taxon>
        <taxon>Craniata</taxon>
        <taxon>Vertebrata</taxon>
        <taxon>Euteleostomi</taxon>
        <taxon>Mammalia</taxon>
        <taxon>Eutheria</taxon>
        <taxon>Euarchontoglires</taxon>
        <taxon>Primates</taxon>
        <taxon>Haplorrhini</taxon>
        <taxon>Catarrhini</taxon>
        <taxon>Hominidae</taxon>
        <taxon>Homo</taxon>
    </lineage>
</organism>
<name>ZHX2_HUMAN</name>
<keyword id="KW-0002">3D-structure</keyword>
<keyword id="KW-0221">Differentiation</keyword>
<keyword id="KW-0238">DNA-binding</keyword>
<keyword id="KW-0371">Homeobox</keyword>
<keyword id="KW-1017">Isopeptide bond</keyword>
<keyword id="KW-0479">Metal-binding</keyword>
<keyword id="KW-0524">Neurogenesis</keyword>
<keyword id="KW-0539">Nucleus</keyword>
<keyword id="KW-0597">Phosphoprotein</keyword>
<keyword id="KW-1267">Proteomics identification</keyword>
<keyword id="KW-1185">Reference proteome</keyword>
<keyword id="KW-0677">Repeat</keyword>
<keyword id="KW-0678">Repressor</keyword>
<keyword id="KW-0804">Transcription</keyword>
<keyword id="KW-0805">Transcription regulation</keyword>
<keyword id="KW-0832">Ubl conjugation</keyword>
<keyword id="KW-0862">Zinc</keyword>
<keyword id="KW-0863">Zinc-finger</keyword>
<accession>Q9Y6X8</accession>